<keyword id="KW-0143">Chaperone</keyword>
<keyword id="KW-0574">Periplasm</keyword>
<keyword id="KW-0653">Protein transport</keyword>
<keyword id="KW-0732">Signal</keyword>
<keyword id="KW-0813">Transport</keyword>
<reference key="1">
    <citation type="submission" date="2007-11" db="EMBL/GenBank/DDBJ databases">
        <title>Complete sequence of chromosome of Shewanella baltica OS195.</title>
        <authorList>
            <consortium name="US DOE Joint Genome Institute"/>
            <person name="Copeland A."/>
            <person name="Lucas S."/>
            <person name="Lapidus A."/>
            <person name="Barry K."/>
            <person name="Glavina del Rio T."/>
            <person name="Dalin E."/>
            <person name="Tice H."/>
            <person name="Pitluck S."/>
            <person name="Chain P."/>
            <person name="Malfatti S."/>
            <person name="Shin M."/>
            <person name="Vergez L."/>
            <person name="Schmutz J."/>
            <person name="Larimer F."/>
            <person name="Land M."/>
            <person name="Hauser L."/>
            <person name="Kyrpides N."/>
            <person name="Kim E."/>
            <person name="Brettar I."/>
            <person name="Rodrigues J."/>
            <person name="Konstantinidis K."/>
            <person name="Klappenbach J."/>
            <person name="Hofle M."/>
            <person name="Tiedje J."/>
            <person name="Richardson P."/>
        </authorList>
    </citation>
    <scope>NUCLEOTIDE SEQUENCE [LARGE SCALE GENOMIC DNA]</scope>
    <source>
        <strain>OS195</strain>
    </source>
</reference>
<feature type="signal peptide" evidence="1">
    <location>
        <begin position="1"/>
        <end position="22"/>
    </location>
</feature>
<feature type="chain" id="PRO_5000297131" description="Outer-membrane lipoprotein carrier protein">
    <location>
        <begin position="23"/>
        <end position="208"/>
    </location>
</feature>
<organism>
    <name type="scientific">Shewanella baltica (strain OS195)</name>
    <dbReference type="NCBI Taxonomy" id="399599"/>
    <lineage>
        <taxon>Bacteria</taxon>
        <taxon>Pseudomonadati</taxon>
        <taxon>Pseudomonadota</taxon>
        <taxon>Gammaproteobacteria</taxon>
        <taxon>Alteromonadales</taxon>
        <taxon>Shewanellaceae</taxon>
        <taxon>Shewanella</taxon>
    </lineage>
</organism>
<evidence type="ECO:0000255" key="1">
    <source>
        <dbReference type="HAMAP-Rule" id="MF_00240"/>
    </source>
</evidence>
<proteinExistence type="inferred from homology"/>
<gene>
    <name evidence="1" type="primary">lolA</name>
    <name type="ordered locus">Sbal195_2322</name>
</gene>
<name>LOLA_SHEB9</name>
<sequence length="208" mass="23190">MKKRLCAVLLASPLLFSAAVFADDAQQLRDKLIGTASLKADFKQTVTDVNKKVIQTGSGIFALAYPNQFYWHLTQPDESQIVADGKDLWIYNPFAEEVVIMDFAEAINASPIALLVHRDDATWSQYAVTKQQDCYEIKPKAIDSGILSVKVCFKNAQLANFNVADDKGNLSQFDLSNQQAITDKDKALFSFVLPDNVDVDDQRRKTAH</sequence>
<comment type="function">
    <text evidence="1">Participates in the translocation of lipoproteins from the inner membrane to the outer membrane. Only forms a complex with a lipoprotein if the residue after the N-terminal Cys is not an aspartate (The Asp acts as a targeting signal to indicate that the lipoprotein should stay in the inner membrane).</text>
</comment>
<comment type="subunit">
    <text evidence="1">Monomer.</text>
</comment>
<comment type="subcellular location">
    <subcellularLocation>
        <location evidence="1">Periplasm</location>
    </subcellularLocation>
</comment>
<comment type="similarity">
    <text evidence="1">Belongs to the LolA family.</text>
</comment>
<protein>
    <recommendedName>
        <fullName evidence="1">Outer-membrane lipoprotein carrier protein</fullName>
    </recommendedName>
</protein>
<dbReference type="EMBL" id="CP000891">
    <property type="protein sequence ID" value="ABX49490.1"/>
    <property type="molecule type" value="Genomic_DNA"/>
</dbReference>
<dbReference type="RefSeq" id="WP_006087495.1">
    <property type="nucleotide sequence ID" value="NC_009997.1"/>
</dbReference>
<dbReference type="SMR" id="A9L272"/>
<dbReference type="TCDB" id="1.B.46.1.2">
    <property type="family name" value="the outer membrane lolab lipoprotein insertion apparatus (lolab) family"/>
</dbReference>
<dbReference type="GeneID" id="11772450"/>
<dbReference type="KEGG" id="sbn:Sbal195_2322"/>
<dbReference type="HOGENOM" id="CLU_087560_1_1_6"/>
<dbReference type="Proteomes" id="UP000000770">
    <property type="component" value="Chromosome"/>
</dbReference>
<dbReference type="GO" id="GO:0030288">
    <property type="term" value="C:outer membrane-bounded periplasmic space"/>
    <property type="evidence" value="ECO:0007669"/>
    <property type="project" value="TreeGrafter"/>
</dbReference>
<dbReference type="GO" id="GO:0044874">
    <property type="term" value="P:lipoprotein localization to outer membrane"/>
    <property type="evidence" value="ECO:0007669"/>
    <property type="project" value="UniProtKB-UniRule"/>
</dbReference>
<dbReference type="GO" id="GO:0042953">
    <property type="term" value="P:lipoprotein transport"/>
    <property type="evidence" value="ECO:0007669"/>
    <property type="project" value="InterPro"/>
</dbReference>
<dbReference type="CDD" id="cd16325">
    <property type="entry name" value="LolA"/>
    <property type="match status" value="1"/>
</dbReference>
<dbReference type="Gene3D" id="2.50.20.10">
    <property type="entry name" value="Lipoprotein localisation LolA/LolB/LppX"/>
    <property type="match status" value="1"/>
</dbReference>
<dbReference type="HAMAP" id="MF_00240">
    <property type="entry name" value="LolA"/>
    <property type="match status" value="1"/>
</dbReference>
<dbReference type="InterPro" id="IPR029046">
    <property type="entry name" value="LolA/LolB/LppX"/>
</dbReference>
<dbReference type="InterPro" id="IPR004564">
    <property type="entry name" value="OM_lipoprot_carrier_LolA-like"/>
</dbReference>
<dbReference type="InterPro" id="IPR018323">
    <property type="entry name" value="OM_lipoprot_carrier_LolA_Pbac"/>
</dbReference>
<dbReference type="NCBIfam" id="TIGR00547">
    <property type="entry name" value="lolA"/>
    <property type="match status" value="1"/>
</dbReference>
<dbReference type="PANTHER" id="PTHR35869">
    <property type="entry name" value="OUTER-MEMBRANE LIPOPROTEIN CARRIER PROTEIN"/>
    <property type="match status" value="1"/>
</dbReference>
<dbReference type="PANTHER" id="PTHR35869:SF1">
    <property type="entry name" value="OUTER-MEMBRANE LIPOPROTEIN CARRIER PROTEIN"/>
    <property type="match status" value="1"/>
</dbReference>
<dbReference type="Pfam" id="PF03548">
    <property type="entry name" value="LolA"/>
    <property type="match status" value="1"/>
</dbReference>
<dbReference type="SUPFAM" id="SSF89392">
    <property type="entry name" value="Prokaryotic lipoproteins and lipoprotein localization factors"/>
    <property type="match status" value="1"/>
</dbReference>
<accession>A9L272</accession>